<keyword id="KW-1185">Reference proteome</keyword>
<keyword id="KW-0687">Ribonucleoprotein</keyword>
<keyword id="KW-0689">Ribosomal protein</keyword>
<keyword id="KW-0694">RNA-binding</keyword>
<keyword id="KW-0699">rRNA-binding</keyword>
<organism>
    <name type="scientific">Laribacter hongkongensis (strain HLHK9)</name>
    <dbReference type="NCBI Taxonomy" id="557598"/>
    <lineage>
        <taxon>Bacteria</taxon>
        <taxon>Pseudomonadati</taxon>
        <taxon>Pseudomonadota</taxon>
        <taxon>Betaproteobacteria</taxon>
        <taxon>Neisseriales</taxon>
        <taxon>Aquaspirillaceae</taxon>
        <taxon>Laribacter</taxon>
    </lineage>
</organism>
<dbReference type="EMBL" id="CP001154">
    <property type="protein sequence ID" value="ACO73239.1"/>
    <property type="molecule type" value="Genomic_DNA"/>
</dbReference>
<dbReference type="RefSeq" id="WP_012695734.1">
    <property type="nucleotide sequence ID" value="NC_012559.1"/>
</dbReference>
<dbReference type="SMR" id="C1DAQ8"/>
<dbReference type="STRING" id="557598.LHK_00244"/>
<dbReference type="GeneID" id="75110364"/>
<dbReference type="KEGG" id="lhk:LHK_00244"/>
<dbReference type="eggNOG" id="COG0244">
    <property type="taxonomic scope" value="Bacteria"/>
</dbReference>
<dbReference type="HOGENOM" id="CLU_092227_0_1_4"/>
<dbReference type="Proteomes" id="UP000002010">
    <property type="component" value="Chromosome"/>
</dbReference>
<dbReference type="GO" id="GO:1990904">
    <property type="term" value="C:ribonucleoprotein complex"/>
    <property type="evidence" value="ECO:0007669"/>
    <property type="project" value="UniProtKB-KW"/>
</dbReference>
<dbReference type="GO" id="GO:0005840">
    <property type="term" value="C:ribosome"/>
    <property type="evidence" value="ECO:0007669"/>
    <property type="project" value="UniProtKB-KW"/>
</dbReference>
<dbReference type="GO" id="GO:0070180">
    <property type="term" value="F:large ribosomal subunit rRNA binding"/>
    <property type="evidence" value="ECO:0007669"/>
    <property type="project" value="UniProtKB-UniRule"/>
</dbReference>
<dbReference type="GO" id="GO:0006412">
    <property type="term" value="P:translation"/>
    <property type="evidence" value="ECO:0007669"/>
    <property type="project" value="UniProtKB-UniRule"/>
</dbReference>
<dbReference type="CDD" id="cd05797">
    <property type="entry name" value="Ribosomal_L10"/>
    <property type="match status" value="1"/>
</dbReference>
<dbReference type="Gene3D" id="3.30.70.1730">
    <property type="match status" value="1"/>
</dbReference>
<dbReference type="Gene3D" id="6.10.250.290">
    <property type="match status" value="1"/>
</dbReference>
<dbReference type="HAMAP" id="MF_00362">
    <property type="entry name" value="Ribosomal_uL10"/>
    <property type="match status" value="1"/>
</dbReference>
<dbReference type="InterPro" id="IPR001790">
    <property type="entry name" value="Ribosomal_uL10"/>
</dbReference>
<dbReference type="InterPro" id="IPR043141">
    <property type="entry name" value="Ribosomal_uL10-like_sf"/>
</dbReference>
<dbReference type="InterPro" id="IPR022973">
    <property type="entry name" value="Ribosomal_uL10_bac"/>
</dbReference>
<dbReference type="InterPro" id="IPR047865">
    <property type="entry name" value="Ribosomal_uL10_bac_type"/>
</dbReference>
<dbReference type="NCBIfam" id="NF000955">
    <property type="entry name" value="PRK00099.1-1"/>
    <property type="match status" value="1"/>
</dbReference>
<dbReference type="PANTHER" id="PTHR11560">
    <property type="entry name" value="39S RIBOSOMAL PROTEIN L10, MITOCHONDRIAL"/>
    <property type="match status" value="1"/>
</dbReference>
<dbReference type="Pfam" id="PF00466">
    <property type="entry name" value="Ribosomal_L10"/>
    <property type="match status" value="1"/>
</dbReference>
<dbReference type="SUPFAM" id="SSF160369">
    <property type="entry name" value="Ribosomal protein L10-like"/>
    <property type="match status" value="1"/>
</dbReference>
<sequence>MSLNLEDKKAVVAEIAAQVATAQTIVVAEYRGIEVSSMTKLRAKAREQGVYLRVLKNTLARRAVADTPFAGLADQMVGPLVYGISEDPVAAAKVLNDFAKVDNKIVIKAGSYDGKVLGTAEVAELASIPSRDELLSKLLFVMQAPVSGMARVLAAVAEKKGEGEAVAA</sequence>
<evidence type="ECO:0000255" key="1">
    <source>
        <dbReference type="HAMAP-Rule" id="MF_00362"/>
    </source>
</evidence>
<evidence type="ECO:0000305" key="2"/>
<protein>
    <recommendedName>
        <fullName evidence="1">Large ribosomal subunit protein uL10</fullName>
    </recommendedName>
    <alternativeName>
        <fullName evidence="2">50S ribosomal protein L10</fullName>
    </alternativeName>
</protein>
<name>RL10_LARHH</name>
<feature type="chain" id="PRO_1000195551" description="Large ribosomal subunit protein uL10">
    <location>
        <begin position="1"/>
        <end position="168"/>
    </location>
</feature>
<reference key="1">
    <citation type="journal article" date="2009" name="PLoS Genet.">
        <title>The complete genome and proteome of Laribacter hongkongensis reveal potential mechanisms for adaptations to different temperatures and habitats.</title>
        <authorList>
            <person name="Woo P.C.Y."/>
            <person name="Lau S.K.P."/>
            <person name="Tse H."/>
            <person name="Teng J.L.L."/>
            <person name="Curreem S.O."/>
            <person name="Tsang A.K.L."/>
            <person name="Fan R.Y.Y."/>
            <person name="Wong G.K.M."/>
            <person name="Huang Y."/>
            <person name="Loman N.J."/>
            <person name="Snyder L.A.S."/>
            <person name="Cai J.J."/>
            <person name="Huang J.-D."/>
            <person name="Mak W."/>
            <person name="Pallen M.J."/>
            <person name="Lok S."/>
            <person name="Yuen K.-Y."/>
        </authorList>
    </citation>
    <scope>NUCLEOTIDE SEQUENCE [LARGE SCALE GENOMIC DNA]</scope>
    <source>
        <strain>HLHK9</strain>
    </source>
</reference>
<accession>C1DAQ8</accession>
<comment type="function">
    <text evidence="1">Forms part of the ribosomal stalk, playing a central role in the interaction of the ribosome with GTP-bound translation factors.</text>
</comment>
<comment type="subunit">
    <text evidence="1">Part of the ribosomal stalk of the 50S ribosomal subunit. The N-terminus interacts with L11 and the large rRNA to form the base of the stalk. The C-terminus forms an elongated spine to which L12 dimers bind in a sequential fashion forming a multimeric L10(L12)X complex.</text>
</comment>
<comment type="similarity">
    <text evidence="1">Belongs to the universal ribosomal protein uL10 family.</text>
</comment>
<gene>
    <name evidence="1" type="primary">rplJ</name>
    <name type="ordered locus">LHK_00244</name>
</gene>
<proteinExistence type="inferred from homology"/>